<name>UPPP_STRPC</name>
<sequence>MLIIELLKAIFFGIIEGITEWLPVSSTGHLILVQEFIRLNQDKAFIEMFNIVIQLGAIIAVMLIYFERLNPFQPGKTAREVQLTWQLWLKVVIACIPSILIAVPLDNWFEAHFYFMVPIAIALIVYGIAFIWIEKQNAQQEPAVTDLARMSYKTAFFIGCFQVLSIVPGTSRSGATILGAIILGTSRTVAADFTFFLAIPTMFGYSGLKAVKFFLDGHHLDFAQVLILLVASLTAFVVSLLAIRFLTHYVKKHDFTIFGKYRIVLGSLLLIYSFFKFVF</sequence>
<dbReference type="EC" id="3.6.1.27" evidence="1"/>
<dbReference type="EMBL" id="CP000259">
    <property type="protein sequence ID" value="ABF31428.1"/>
    <property type="molecule type" value="Genomic_DNA"/>
</dbReference>
<dbReference type="RefSeq" id="WP_002991126.1">
    <property type="nucleotide sequence ID" value="NC_008021.1"/>
</dbReference>
<dbReference type="SMR" id="Q1JNH1"/>
<dbReference type="KEGG" id="spk:MGAS9429_Spy0240"/>
<dbReference type="HOGENOM" id="CLU_060296_2_0_9"/>
<dbReference type="Proteomes" id="UP000002433">
    <property type="component" value="Chromosome"/>
</dbReference>
<dbReference type="GO" id="GO:0005886">
    <property type="term" value="C:plasma membrane"/>
    <property type="evidence" value="ECO:0007669"/>
    <property type="project" value="UniProtKB-SubCell"/>
</dbReference>
<dbReference type="GO" id="GO:0050380">
    <property type="term" value="F:undecaprenyl-diphosphatase activity"/>
    <property type="evidence" value="ECO:0007669"/>
    <property type="project" value="UniProtKB-UniRule"/>
</dbReference>
<dbReference type="GO" id="GO:0071555">
    <property type="term" value="P:cell wall organization"/>
    <property type="evidence" value="ECO:0007669"/>
    <property type="project" value="UniProtKB-KW"/>
</dbReference>
<dbReference type="GO" id="GO:0009252">
    <property type="term" value="P:peptidoglycan biosynthetic process"/>
    <property type="evidence" value="ECO:0007669"/>
    <property type="project" value="UniProtKB-KW"/>
</dbReference>
<dbReference type="GO" id="GO:0008360">
    <property type="term" value="P:regulation of cell shape"/>
    <property type="evidence" value="ECO:0007669"/>
    <property type="project" value="UniProtKB-KW"/>
</dbReference>
<dbReference type="GO" id="GO:0046677">
    <property type="term" value="P:response to antibiotic"/>
    <property type="evidence" value="ECO:0007669"/>
    <property type="project" value="UniProtKB-UniRule"/>
</dbReference>
<dbReference type="HAMAP" id="MF_01006">
    <property type="entry name" value="Undec_diphosphatase"/>
    <property type="match status" value="1"/>
</dbReference>
<dbReference type="InterPro" id="IPR003824">
    <property type="entry name" value="UppP"/>
</dbReference>
<dbReference type="NCBIfam" id="NF001391">
    <property type="entry name" value="PRK00281.1-5"/>
    <property type="match status" value="1"/>
</dbReference>
<dbReference type="PANTHER" id="PTHR30622">
    <property type="entry name" value="UNDECAPRENYL-DIPHOSPHATASE"/>
    <property type="match status" value="1"/>
</dbReference>
<dbReference type="PANTHER" id="PTHR30622:SF3">
    <property type="entry name" value="UNDECAPRENYL-DIPHOSPHATASE"/>
    <property type="match status" value="1"/>
</dbReference>
<dbReference type="Pfam" id="PF02673">
    <property type="entry name" value="BacA"/>
    <property type="match status" value="1"/>
</dbReference>
<gene>
    <name evidence="1" type="primary">uppP</name>
    <name type="synonym">bacA</name>
    <name type="ordered locus">MGAS9429_Spy0240</name>
</gene>
<keyword id="KW-0046">Antibiotic resistance</keyword>
<keyword id="KW-1003">Cell membrane</keyword>
<keyword id="KW-0133">Cell shape</keyword>
<keyword id="KW-0961">Cell wall biogenesis/degradation</keyword>
<keyword id="KW-0378">Hydrolase</keyword>
<keyword id="KW-0472">Membrane</keyword>
<keyword id="KW-0573">Peptidoglycan synthesis</keyword>
<keyword id="KW-0812">Transmembrane</keyword>
<keyword id="KW-1133">Transmembrane helix</keyword>
<evidence type="ECO:0000255" key="1">
    <source>
        <dbReference type="HAMAP-Rule" id="MF_01006"/>
    </source>
</evidence>
<proteinExistence type="inferred from homology"/>
<protein>
    <recommendedName>
        <fullName evidence="1">Undecaprenyl-diphosphatase</fullName>
        <ecNumber evidence="1">3.6.1.27</ecNumber>
    </recommendedName>
    <alternativeName>
        <fullName evidence="1">Bacitracin resistance protein</fullName>
    </alternativeName>
    <alternativeName>
        <fullName evidence="1">Undecaprenyl pyrophosphate phosphatase</fullName>
    </alternativeName>
</protein>
<feature type="chain" id="PRO_0000250269" description="Undecaprenyl-diphosphatase">
    <location>
        <begin position="1"/>
        <end position="279"/>
    </location>
</feature>
<feature type="transmembrane region" description="Helical" evidence="1">
    <location>
        <begin position="2"/>
        <end position="22"/>
    </location>
</feature>
<feature type="transmembrane region" description="Helical" evidence="1">
    <location>
        <begin position="44"/>
        <end position="64"/>
    </location>
</feature>
<feature type="transmembrane region" description="Helical" evidence="1">
    <location>
        <begin position="85"/>
        <end position="105"/>
    </location>
</feature>
<feature type="transmembrane region" description="Helical" evidence="1">
    <location>
        <begin position="113"/>
        <end position="133"/>
    </location>
</feature>
<feature type="transmembrane region" description="Helical" evidence="1">
    <location>
        <begin position="163"/>
        <end position="183"/>
    </location>
</feature>
<feature type="transmembrane region" description="Helical" evidence="1">
    <location>
        <begin position="188"/>
        <end position="208"/>
    </location>
</feature>
<feature type="transmembrane region" description="Helical" evidence="1">
    <location>
        <begin position="223"/>
        <end position="243"/>
    </location>
</feature>
<feature type="transmembrane region" description="Helical" evidence="1">
    <location>
        <begin position="255"/>
        <end position="275"/>
    </location>
</feature>
<reference key="1">
    <citation type="journal article" date="2006" name="Proc. Natl. Acad. Sci. U.S.A.">
        <title>Molecular genetic anatomy of inter- and intraserotype variation in the human bacterial pathogen group A Streptococcus.</title>
        <authorList>
            <person name="Beres S.B."/>
            <person name="Richter E.W."/>
            <person name="Nagiec M.J."/>
            <person name="Sumby P."/>
            <person name="Porcella S.F."/>
            <person name="DeLeo F.R."/>
            <person name="Musser J.M."/>
        </authorList>
    </citation>
    <scope>NUCLEOTIDE SEQUENCE [LARGE SCALE GENOMIC DNA]</scope>
    <source>
        <strain>MGAS9429</strain>
    </source>
</reference>
<organism>
    <name type="scientific">Streptococcus pyogenes serotype M12 (strain MGAS9429)</name>
    <dbReference type="NCBI Taxonomy" id="370551"/>
    <lineage>
        <taxon>Bacteria</taxon>
        <taxon>Bacillati</taxon>
        <taxon>Bacillota</taxon>
        <taxon>Bacilli</taxon>
        <taxon>Lactobacillales</taxon>
        <taxon>Streptococcaceae</taxon>
        <taxon>Streptococcus</taxon>
    </lineage>
</organism>
<accession>Q1JNH1</accession>
<comment type="function">
    <text evidence="1">Catalyzes the dephosphorylation of undecaprenyl diphosphate (UPP). Confers resistance to bacitracin.</text>
</comment>
<comment type="catalytic activity">
    <reaction evidence="1">
        <text>di-trans,octa-cis-undecaprenyl diphosphate + H2O = di-trans,octa-cis-undecaprenyl phosphate + phosphate + H(+)</text>
        <dbReference type="Rhea" id="RHEA:28094"/>
        <dbReference type="ChEBI" id="CHEBI:15377"/>
        <dbReference type="ChEBI" id="CHEBI:15378"/>
        <dbReference type="ChEBI" id="CHEBI:43474"/>
        <dbReference type="ChEBI" id="CHEBI:58405"/>
        <dbReference type="ChEBI" id="CHEBI:60392"/>
        <dbReference type="EC" id="3.6.1.27"/>
    </reaction>
</comment>
<comment type="subcellular location">
    <subcellularLocation>
        <location evidence="1">Cell membrane</location>
        <topology evidence="1">Multi-pass membrane protein</topology>
    </subcellularLocation>
</comment>
<comment type="miscellaneous">
    <text>Bacitracin is thought to be involved in the inhibition of peptidoglycan synthesis by sequestering undecaprenyl diphosphate, thereby reducing the pool of lipid carrier available.</text>
</comment>
<comment type="similarity">
    <text evidence="1">Belongs to the UppP family.</text>
</comment>